<protein>
    <recommendedName>
        <fullName>D-alanine--D-alanine ligase B</fullName>
        <ecNumber evidence="2">6.3.2.4</ecNumber>
    </recommendedName>
    <alternativeName>
        <fullName>D-Ala-D-Ala ligase B</fullName>
    </alternativeName>
    <alternativeName>
        <fullName>D-alanylalanine synthetase B</fullName>
    </alternativeName>
</protein>
<dbReference type="EC" id="6.3.2.4" evidence="2"/>
<dbReference type="EMBL" id="M14029">
    <property type="protein sequence ID" value="AAA23672.1"/>
    <property type="molecule type" value="Genomic_DNA"/>
</dbReference>
<dbReference type="EMBL" id="K02668">
    <property type="protein sequence ID" value="AAA23815.1"/>
    <property type="molecule type" value="Genomic_DNA"/>
</dbReference>
<dbReference type="EMBL" id="X52644">
    <property type="protein sequence ID" value="CAA36869.1"/>
    <property type="molecule type" value="Genomic_DNA"/>
</dbReference>
<dbReference type="EMBL" id="X55034">
    <property type="protein sequence ID" value="CAA38869.1"/>
    <property type="molecule type" value="Genomic_DNA"/>
</dbReference>
<dbReference type="EMBL" id="U00096">
    <property type="protein sequence ID" value="AAC73203.1"/>
    <property type="molecule type" value="Genomic_DNA"/>
</dbReference>
<dbReference type="EMBL" id="AP009048">
    <property type="protein sequence ID" value="BAB96660.1"/>
    <property type="molecule type" value="Genomic_DNA"/>
</dbReference>
<dbReference type="PIR" id="A30289">
    <property type="entry name" value="CEECDL"/>
</dbReference>
<dbReference type="RefSeq" id="NP_414634.1">
    <property type="nucleotide sequence ID" value="NC_000913.3"/>
</dbReference>
<dbReference type="RefSeq" id="WP_000130056.1">
    <property type="nucleotide sequence ID" value="NZ_STEB01000010.1"/>
</dbReference>
<dbReference type="PDB" id="1IOV">
    <property type="method" value="X-ray"/>
    <property type="resolution" value="2.20 A"/>
    <property type="chains" value="A=1-306"/>
</dbReference>
<dbReference type="PDB" id="1IOW">
    <property type="method" value="X-ray"/>
    <property type="resolution" value="1.90 A"/>
    <property type="chains" value="A=1-306"/>
</dbReference>
<dbReference type="PDB" id="2DLN">
    <property type="method" value="X-ray"/>
    <property type="resolution" value="2.30 A"/>
    <property type="chains" value="A=1-306"/>
</dbReference>
<dbReference type="PDB" id="4C5A">
    <property type="method" value="X-ray"/>
    <property type="resolution" value="1.65 A"/>
    <property type="chains" value="A/B=1-306"/>
</dbReference>
<dbReference type="PDB" id="4C5B">
    <property type="method" value="X-ray"/>
    <property type="resolution" value="1.50 A"/>
    <property type="chains" value="A/B=1-306"/>
</dbReference>
<dbReference type="PDB" id="4C5C">
    <property type="method" value="X-ray"/>
    <property type="resolution" value="1.40 A"/>
    <property type="chains" value="A/B=1-306"/>
</dbReference>
<dbReference type="PDBsum" id="1IOV"/>
<dbReference type="PDBsum" id="1IOW"/>
<dbReference type="PDBsum" id="2DLN"/>
<dbReference type="PDBsum" id="4C5A"/>
<dbReference type="PDBsum" id="4C5B"/>
<dbReference type="PDBsum" id="4C5C"/>
<dbReference type="SMR" id="P07862"/>
<dbReference type="BioGRID" id="4261114">
    <property type="interactions" value="307"/>
</dbReference>
<dbReference type="BioGRID" id="850681">
    <property type="interactions" value="3"/>
</dbReference>
<dbReference type="FunCoup" id="P07862">
    <property type="interactions" value="375"/>
</dbReference>
<dbReference type="IntAct" id="P07862">
    <property type="interactions" value="4"/>
</dbReference>
<dbReference type="STRING" id="511145.b0092"/>
<dbReference type="BindingDB" id="P07862"/>
<dbReference type="ChEMBL" id="CHEMBL1956"/>
<dbReference type="DrugCentral" id="P07862"/>
<dbReference type="jPOST" id="P07862"/>
<dbReference type="PaxDb" id="511145-b0092"/>
<dbReference type="EnsemblBacteria" id="AAC73203">
    <property type="protein sequence ID" value="AAC73203"/>
    <property type="gene ID" value="b0092"/>
</dbReference>
<dbReference type="GeneID" id="93777342"/>
<dbReference type="GeneID" id="946324"/>
<dbReference type="KEGG" id="ecj:JW0090"/>
<dbReference type="KEGG" id="eco:b0092"/>
<dbReference type="KEGG" id="ecoc:C3026_00365"/>
<dbReference type="PATRIC" id="fig|1411691.4.peg.2188"/>
<dbReference type="EchoBASE" id="EB0210"/>
<dbReference type="eggNOG" id="COG1181">
    <property type="taxonomic scope" value="Bacteria"/>
</dbReference>
<dbReference type="HOGENOM" id="CLU_039268_1_2_6"/>
<dbReference type="InParanoid" id="P07862"/>
<dbReference type="OMA" id="TQYRIPC"/>
<dbReference type="OrthoDB" id="9813261at2"/>
<dbReference type="PhylomeDB" id="P07862"/>
<dbReference type="BioCyc" id="EcoCyc:DALADALALIGB-MONOMER"/>
<dbReference type="BioCyc" id="MetaCyc:DALADALALIGB-MONOMER"/>
<dbReference type="BRENDA" id="6.3.2.4">
    <property type="organism ID" value="2026"/>
</dbReference>
<dbReference type="UniPathway" id="UPA00219"/>
<dbReference type="EvolutionaryTrace" id="P07862"/>
<dbReference type="PRO" id="PR:P07862"/>
<dbReference type="Proteomes" id="UP000000625">
    <property type="component" value="Chromosome"/>
</dbReference>
<dbReference type="GO" id="GO:0005829">
    <property type="term" value="C:cytosol"/>
    <property type="evidence" value="ECO:0000314"/>
    <property type="project" value="EcoCyc"/>
</dbReference>
<dbReference type="GO" id="GO:0005524">
    <property type="term" value="F:ATP binding"/>
    <property type="evidence" value="ECO:0007669"/>
    <property type="project" value="UniProtKB-KW"/>
</dbReference>
<dbReference type="GO" id="GO:0008716">
    <property type="term" value="F:D-alanine-D-alanine ligase activity"/>
    <property type="evidence" value="ECO:0000314"/>
    <property type="project" value="EcoCyc"/>
</dbReference>
<dbReference type="GO" id="GO:0046872">
    <property type="term" value="F:metal ion binding"/>
    <property type="evidence" value="ECO:0007669"/>
    <property type="project" value="UniProtKB-KW"/>
</dbReference>
<dbReference type="GO" id="GO:0042803">
    <property type="term" value="F:protein homodimerization activity"/>
    <property type="evidence" value="ECO:0000314"/>
    <property type="project" value="EcoCyc"/>
</dbReference>
<dbReference type="GO" id="GO:0071555">
    <property type="term" value="P:cell wall organization"/>
    <property type="evidence" value="ECO:0007669"/>
    <property type="project" value="UniProtKB-KW"/>
</dbReference>
<dbReference type="GO" id="GO:0009252">
    <property type="term" value="P:peptidoglycan biosynthetic process"/>
    <property type="evidence" value="ECO:0000315"/>
    <property type="project" value="EcoCyc"/>
</dbReference>
<dbReference type="GO" id="GO:0008360">
    <property type="term" value="P:regulation of cell shape"/>
    <property type="evidence" value="ECO:0007669"/>
    <property type="project" value="UniProtKB-KW"/>
</dbReference>
<dbReference type="FunFam" id="3.30.1490.20:FF:000007">
    <property type="entry name" value="D-alanine--D-alanine ligase"/>
    <property type="match status" value="1"/>
</dbReference>
<dbReference type="FunFam" id="3.30.470.20:FF:000008">
    <property type="entry name" value="D-alanine--D-alanine ligase"/>
    <property type="match status" value="1"/>
</dbReference>
<dbReference type="FunFam" id="3.40.50.20:FF:000013">
    <property type="entry name" value="D-alanine--D-alanine ligase"/>
    <property type="match status" value="1"/>
</dbReference>
<dbReference type="Gene3D" id="3.40.50.20">
    <property type="match status" value="1"/>
</dbReference>
<dbReference type="Gene3D" id="3.30.1490.20">
    <property type="entry name" value="ATP-grasp fold, A domain"/>
    <property type="match status" value="1"/>
</dbReference>
<dbReference type="Gene3D" id="3.30.470.20">
    <property type="entry name" value="ATP-grasp fold, B domain"/>
    <property type="match status" value="1"/>
</dbReference>
<dbReference type="HAMAP" id="MF_00047">
    <property type="entry name" value="Dala_Dala_lig"/>
    <property type="match status" value="1"/>
</dbReference>
<dbReference type="InterPro" id="IPR011761">
    <property type="entry name" value="ATP-grasp"/>
</dbReference>
<dbReference type="InterPro" id="IPR013815">
    <property type="entry name" value="ATP_grasp_subdomain_1"/>
</dbReference>
<dbReference type="InterPro" id="IPR000291">
    <property type="entry name" value="D-Ala_lig_Van_CS"/>
</dbReference>
<dbReference type="InterPro" id="IPR005905">
    <property type="entry name" value="D_ala_D_ala"/>
</dbReference>
<dbReference type="InterPro" id="IPR011095">
    <property type="entry name" value="Dala_Dala_lig_C"/>
</dbReference>
<dbReference type="InterPro" id="IPR011127">
    <property type="entry name" value="Dala_Dala_lig_N"/>
</dbReference>
<dbReference type="InterPro" id="IPR016185">
    <property type="entry name" value="PreATP-grasp_dom_sf"/>
</dbReference>
<dbReference type="NCBIfam" id="TIGR01205">
    <property type="entry name" value="D_ala_D_alaTIGR"/>
    <property type="match status" value="1"/>
</dbReference>
<dbReference type="NCBIfam" id="NF002378">
    <property type="entry name" value="PRK01372.1"/>
    <property type="match status" value="1"/>
</dbReference>
<dbReference type="PANTHER" id="PTHR23132">
    <property type="entry name" value="D-ALANINE--D-ALANINE LIGASE"/>
    <property type="match status" value="1"/>
</dbReference>
<dbReference type="PANTHER" id="PTHR23132:SF23">
    <property type="entry name" value="D-ALANINE--D-ALANINE LIGASE B"/>
    <property type="match status" value="1"/>
</dbReference>
<dbReference type="Pfam" id="PF07478">
    <property type="entry name" value="Dala_Dala_lig_C"/>
    <property type="match status" value="1"/>
</dbReference>
<dbReference type="Pfam" id="PF01820">
    <property type="entry name" value="Dala_Dala_lig_N"/>
    <property type="match status" value="1"/>
</dbReference>
<dbReference type="PIRSF" id="PIRSF039102">
    <property type="entry name" value="Ddl/VanB"/>
    <property type="match status" value="1"/>
</dbReference>
<dbReference type="SUPFAM" id="SSF56059">
    <property type="entry name" value="Glutathione synthetase ATP-binding domain-like"/>
    <property type="match status" value="1"/>
</dbReference>
<dbReference type="SUPFAM" id="SSF52440">
    <property type="entry name" value="PreATP-grasp domain"/>
    <property type="match status" value="1"/>
</dbReference>
<dbReference type="PROSITE" id="PS50975">
    <property type="entry name" value="ATP_GRASP"/>
    <property type="match status" value="1"/>
</dbReference>
<dbReference type="PROSITE" id="PS00843">
    <property type="entry name" value="DALA_DALA_LIGASE_1"/>
    <property type="match status" value="1"/>
</dbReference>
<dbReference type="PROSITE" id="PS00844">
    <property type="entry name" value="DALA_DALA_LIGASE_2"/>
    <property type="match status" value="1"/>
</dbReference>
<organism>
    <name type="scientific">Escherichia coli (strain K12)</name>
    <dbReference type="NCBI Taxonomy" id="83333"/>
    <lineage>
        <taxon>Bacteria</taxon>
        <taxon>Pseudomonadati</taxon>
        <taxon>Pseudomonadota</taxon>
        <taxon>Gammaproteobacteria</taxon>
        <taxon>Enterobacterales</taxon>
        <taxon>Enterobacteriaceae</taxon>
        <taxon>Escherichia</taxon>
    </lineage>
</organism>
<reference key="1">
    <citation type="journal article" date="1986" name="J. Bacteriol.">
        <title>Further evidence for overlapping transcriptional units in an Escherichia coli cell envelope-cell division gene cluster: DNA sequence and transcriptional organization of the ddl ftsQ region.</title>
        <authorList>
            <person name="Robinson A.C."/>
            <person name="Kenan D.J."/>
            <person name="Sweeney J."/>
            <person name="Donachie W.D."/>
        </authorList>
    </citation>
    <scope>NUCLEOTIDE SEQUENCE [GENOMIC DNA]</scope>
    <source>
        <strain>K12</strain>
    </source>
</reference>
<reference key="2">
    <citation type="journal article" date="1992" name="Nucleic Acids Res.">
        <title>Systematic sequencing of the Escherichia coli genome: analysis of the 0-2.4 min region.</title>
        <authorList>
            <person name="Yura T."/>
            <person name="Mori H."/>
            <person name="Nagai H."/>
            <person name="Nagata T."/>
            <person name="Ishihama A."/>
            <person name="Fujita N."/>
            <person name="Isono K."/>
            <person name="Mizobuchi K."/>
            <person name="Nakata A."/>
        </authorList>
    </citation>
    <scope>NUCLEOTIDE SEQUENCE [LARGE SCALE GENOMIC DNA]</scope>
    <source>
        <strain>K12</strain>
    </source>
</reference>
<reference key="3">
    <citation type="journal article" date="1997" name="Science">
        <title>The complete genome sequence of Escherichia coli K-12.</title>
        <authorList>
            <person name="Blattner F.R."/>
            <person name="Plunkett G. III"/>
            <person name="Bloch C.A."/>
            <person name="Perna N.T."/>
            <person name="Burland V."/>
            <person name="Riley M."/>
            <person name="Collado-Vides J."/>
            <person name="Glasner J.D."/>
            <person name="Rode C.K."/>
            <person name="Mayhew G.F."/>
            <person name="Gregor J."/>
            <person name="Davis N.W."/>
            <person name="Kirkpatrick H.A."/>
            <person name="Goeden M.A."/>
            <person name="Rose D.J."/>
            <person name="Mau B."/>
            <person name="Shao Y."/>
        </authorList>
    </citation>
    <scope>NUCLEOTIDE SEQUENCE [LARGE SCALE GENOMIC DNA]</scope>
    <source>
        <strain>K12 / MG1655 / ATCC 47076</strain>
    </source>
</reference>
<reference key="4">
    <citation type="journal article" date="2006" name="Mol. Syst. Biol.">
        <title>Highly accurate genome sequences of Escherichia coli K-12 strains MG1655 and W3110.</title>
        <authorList>
            <person name="Hayashi K."/>
            <person name="Morooka N."/>
            <person name="Yamamoto Y."/>
            <person name="Fujita K."/>
            <person name="Isono K."/>
            <person name="Choi S."/>
            <person name="Ohtsubo E."/>
            <person name="Baba T."/>
            <person name="Wanner B.L."/>
            <person name="Mori H."/>
            <person name="Horiuchi T."/>
        </authorList>
    </citation>
    <scope>NUCLEOTIDE SEQUENCE [LARGE SCALE GENOMIC DNA]</scope>
    <source>
        <strain>K12 / W3110 / ATCC 27325 / DSM 5911</strain>
    </source>
</reference>
<reference key="5">
    <citation type="journal article" date="1990" name="Nucleic Acids Res.">
        <title>Nucleotide sequence involving murG and murC in the mra gene cluster region of Escherichia coli.</title>
        <authorList>
            <person name="Ikeda M."/>
            <person name="Wachi M."/>
            <person name="Jung H.K."/>
            <person name="Ishino F."/>
            <person name="Matsuhashi M."/>
        </authorList>
    </citation>
    <scope>NUCLEOTIDE SEQUENCE [GENOMIC DNA] OF 1-41</scope>
    <source>
        <strain>K12</strain>
    </source>
</reference>
<reference key="6">
    <citation type="journal article" date="1990" name="J. Bacteriol.">
        <title>Regulation of expression of the ftsA cell division gene by sequences in upstream genes.</title>
        <authorList>
            <person name="Dewar S.J."/>
            <person name="Donachie W.D."/>
        </authorList>
    </citation>
    <scope>NUCLEOTIDE SEQUENCE [GENOMIC DNA] OF 300-306</scope>
</reference>
<reference key="7">
    <citation type="journal article" date="1992" name="Biochem. J.">
        <title>D-alanine:D-alanine ligase of Escherichia coli. Expression, purification and inhibitory studies on the cloned enzyme.</title>
        <authorList>
            <person name="Al-Bar O.A."/>
            <person name="O'Connor C.D."/>
            <person name="Giles I.G."/>
            <person name="Akhtar M."/>
        </authorList>
    </citation>
    <scope>CHARACTERIZATION</scope>
    <scope>PARTIAL PROTEIN SEQUENCE</scope>
    <scope>CATALYTIC ACTIVITY</scope>
</reference>
<reference key="8">
    <citation type="journal article" date="1994" name="Science">
        <title>Vancomycin resistance: structure of D-alanine:D-alanine ligase at 2.3-A resolution.</title>
        <authorList>
            <person name="Fan C."/>
            <person name="Moews P.C."/>
            <person name="Walsh C.T."/>
            <person name="Knox J.R."/>
        </authorList>
    </citation>
    <scope>X-RAY CRYSTALLOGRAPHY (2.3 ANGSTROMS)</scope>
</reference>
<reference key="9">
    <citation type="journal article" date="1997" name="Biochemistry">
        <title>D-alanine:D-alanine ligase: phosphonate and phosphinate intermediates with wild type and the Y216F mutant.</title>
        <authorList>
            <person name="Fan C."/>
            <person name="Park I.-S."/>
            <person name="Walsh C.T."/>
            <person name="Knox J.R."/>
        </authorList>
    </citation>
    <scope>X-RAY CRYSTALLOGRAPHY (2.2 ANGSTROMS)</scope>
</reference>
<gene>
    <name type="primary">ddlB</name>
    <name type="synonym">ddl</name>
    <name type="ordered locus">b0092</name>
    <name type="ordered locus">JW0090</name>
</gene>
<keyword id="KW-0002">3D-structure</keyword>
<keyword id="KW-0067">ATP-binding</keyword>
<keyword id="KW-0133">Cell shape</keyword>
<keyword id="KW-0961">Cell wall biogenesis/degradation</keyword>
<keyword id="KW-0963">Cytoplasm</keyword>
<keyword id="KW-0903">Direct protein sequencing</keyword>
<keyword id="KW-0436">Ligase</keyword>
<keyword id="KW-0460">Magnesium</keyword>
<keyword id="KW-0464">Manganese</keyword>
<keyword id="KW-0479">Metal-binding</keyword>
<keyword id="KW-0547">Nucleotide-binding</keyword>
<keyword id="KW-0573">Peptidoglycan synthesis</keyword>
<keyword id="KW-1185">Reference proteome</keyword>
<name>DDLB_ECOLI</name>
<evidence type="ECO:0000250" key="1"/>
<evidence type="ECO:0000269" key="2">
    <source>
    </source>
</evidence>
<evidence type="ECO:0000305" key="3"/>
<evidence type="ECO:0007829" key="4">
    <source>
        <dbReference type="PDB" id="4C5C"/>
    </source>
</evidence>
<sequence length="306" mass="32840">MTDKIAVLLGGTSAEREVSLNSGAAVLAGLREGGIDAYPVDPKEVDVTQLKSMGFQKVFIALHGRGGEDGTLQGMLELMGLPYTGSGVMASALSMDKLRSKLLWQGAGLPVAPWVALTRAEFEKGLSDKQLAEISALGLPVIVKPSREGSSVGMSKVVAENALQDALRLAFQHDEEVLIEKWLSGPEFTVAILGEEILPSIRIQPSGTFYDYEAKYLSDETQYFCPAGLEASQEANLQALVLKAWTTLGCKGWGRIDVMLDSDGQFYLLEANTSPGMTSHSLVPMAARQAGMSFSQLVVRILELAD</sequence>
<proteinExistence type="evidence at protein level"/>
<accession>P07862</accession>
<feature type="initiator methionine" description="Removed">
    <location>
        <position position="1"/>
    </location>
</feature>
<feature type="chain" id="PRO_0000177818" description="D-alanine--D-alanine ligase B">
    <location>
        <begin position="2"/>
        <end position="306"/>
    </location>
</feature>
<feature type="domain" description="ATP-grasp">
    <location>
        <begin position="101"/>
        <end position="303"/>
    </location>
</feature>
<feature type="active site">
    <location>
        <position position="15"/>
    </location>
</feature>
<feature type="active site">
    <location>
        <position position="150"/>
    </location>
</feature>
<feature type="active site">
    <location>
        <position position="281"/>
    </location>
</feature>
<feature type="binding site" evidence="1">
    <location>
        <begin position="134"/>
        <end position="189"/>
    </location>
    <ligand>
        <name>ATP</name>
        <dbReference type="ChEBI" id="CHEBI:30616"/>
    </ligand>
</feature>
<feature type="binding site" evidence="1">
    <location>
        <position position="257"/>
    </location>
    <ligand>
        <name>Mg(2+)</name>
        <dbReference type="ChEBI" id="CHEBI:18420"/>
        <label>1</label>
    </ligand>
</feature>
<feature type="binding site" evidence="1">
    <location>
        <position position="270"/>
    </location>
    <ligand>
        <name>Mg(2+)</name>
        <dbReference type="ChEBI" id="CHEBI:18420"/>
        <label>1</label>
    </ligand>
</feature>
<feature type="binding site" evidence="1">
    <location>
        <position position="270"/>
    </location>
    <ligand>
        <name>Mg(2+)</name>
        <dbReference type="ChEBI" id="CHEBI:18420"/>
        <label>2</label>
    </ligand>
</feature>
<feature type="binding site" evidence="1">
    <location>
        <position position="272"/>
    </location>
    <ligand>
        <name>Mg(2+)</name>
        <dbReference type="ChEBI" id="CHEBI:18420"/>
        <label>2</label>
    </ligand>
</feature>
<feature type="strand" evidence="4">
    <location>
        <begin position="4"/>
        <end position="8"/>
    </location>
</feature>
<feature type="helix" evidence="4">
    <location>
        <begin position="16"/>
        <end position="32"/>
    </location>
</feature>
<feature type="strand" evidence="4">
    <location>
        <begin position="36"/>
        <end position="40"/>
    </location>
</feature>
<feature type="turn" evidence="4">
    <location>
        <begin position="42"/>
        <end position="44"/>
    </location>
</feature>
<feature type="helix" evidence="4">
    <location>
        <begin position="47"/>
        <end position="49"/>
    </location>
</feature>
<feature type="turn" evidence="4">
    <location>
        <begin position="50"/>
        <end position="54"/>
    </location>
</feature>
<feature type="strand" evidence="4">
    <location>
        <begin position="57"/>
        <end position="60"/>
    </location>
</feature>
<feature type="turn" evidence="4">
    <location>
        <begin position="65"/>
        <end position="67"/>
    </location>
</feature>
<feature type="strand" evidence="4">
    <location>
        <begin position="68"/>
        <end position="70"/>
    </location>
</feature>
<feature type="helix" evidence="4">
    <location>
        <begin position="71"/>
        <end position="79"/>
    </location>
</feature>
<feature type="strand" evidence="4">
    <location>
        <begin position="83"/>
        <end position="85"/>
    </location>
</feature>
<feature type="helix" evidence="4">
    <location>
        <begin position="88"/>
        <end position="95"/>
    </location>
</feature>
<feature type="helix" evidence="4">
    <location>
        <begin position="97"/>
        <end position="106"/>
    </location>
</feature>
<feature type="strand" evidence="4">
    <location>
        <begin position="114"/>
        <end position="118"/>
    </location>
</feature>
<feature type="helix" evidence="4">
    <location>
        <begin position="119"/>
        <end position="124"/>
    </location>
</feature>
<feature type="helix" evidence="4">
    <location>
        <begin position="128"/>
        <end position="136"/>
    </location>
</feature>
<feature type="strand" evidence="4">
    <location>
        <begin position="139"/>
        <end position="147"/>
    </location>
</feature>
<feature type="turn" evidence="4">
    <location>
        <begin position="150"/>
        <end position="153"/>
    </location>
</feature>
<feature type="strand" evidence="4">
    <location>
        <begin position="155"/>
        <end position="157"/>
    </location>
</feature>
<feature type="helix" evidence="4">
    <location>
        <begin position="160"/>
        <end position="162"/>
    </location>
</feature>
<feature type="helix" evidence="4">
    <location>
        <begin position="163"/>
        <end position="171"/>
    </location>
</feature>
<feature type="strand" evidence="4">
    <location>
        <begin position="175"/>
        <end position="181"/>
    </location>
</feature>
<feature type="strand" evidence="4">
    <location>
        <begin position="187"/>
        <end position="193"/>
    </location>
</feature>
<feature type="strand" evidence="4">
    <location>
        <begin position="201"/>
        <end position="204"/>
    </location>
</feature>
<feature type="strand" evidence="4">
    <location>
        <begin position="206"/>
        <end position="209"/>
    </location>
</feature>
<feature type="helix" evidence="4">
    <location>
        <begin position="212"/>
        <end position="216"/>
    </location>
</feature>
<feature type="strand" evidence="4">
    <location>
        <begin position="222"/>
        <end position="226"/>
    </location>
</feature>
<feature type="helix" evidence="4">
    <location>
        <begin position="231"/>
        <end position="248"/>
    </location>
</feature>
<feature type="strand" evidence="4">
    <location>
        <begin position="252"/>
        <end position="260"/>
    </location>
</feature>
<feature type="strand" evidence="4">
    <location>
        <begin position="266"/>
        <end position="274"/>
    </location>
</feature>
<feature type="helix" evidence="4">
    <location>
        <begin position="282"/>
        <end position="289"/>
    </location>
</feature>
<feature type="helix" evidence="4">
    <location>
        <begin position="294"/>
        <end position="303"/>
    </location>
</feature>
<comment type="function">
    <text>Cell wall formation.</text>
</comment>
<comment type="catalytic activity">
    <reaction evidence="2">
        <text>2 D-alanine + ATP = D-alanyl-D-alanine + ADP + phosphate + H(+)</text>
        <dbReference type="Rhea" id="RHEA:11224"/>
        <dbReference type="ChEBI" id="CHEBI:15378"/>
        <dbReference type="ChEBI" id="CHEBI:30616"/>
        <dbReference type="ChEBI" id="CHEBI:43474"/>
        <dbReference type="ChEBI" id="CHEBI:57416"/>
        <dbReference type="ChEBI" id="CHEBI:57822"/>
        <dbReference type="ChEBI" id="CHEBI:456216"/>
        <dbReference type="EC" id="6.3.2.4"/>
    </reaction>
</comment>
<comment type="cofactor">
    <cofactor evidence="1">
        <name>Mg(2+)</name>
        <dbReference type="ChEBI" id="CHEBI:18420"/>
    </cofactor>
    <cofactor evidence="1">
        <name>Mn(2+)</name>
        <dbReference type="ChEBI" id="CHEBI:29035"/>
    </cofactor>
    <text evidence="1">Binds 2 magnesium or manganese ions per subunit.</text>
</comment>
<comment type="pathway">
    <text>Cell wall biogenesis; peptidoglycan biosynthesis.</text>
</comment>
<comment type="subunit">
    <text>Monomer.</text>
</comment>
<comment type="subcellular location">
    <subcellularLocation>
        <location>Cytoplasm</location>
    </subcellularLocation>
</comment>
<comment type="similarity">
    <text evidence="3">Belongs to the D-alanine--D-alanine ligase family.</text>
</comment>